<reference key="1">
    <citation type="submission" date="2006-12" db="EMBL/GenBank/DDBJ databases">
        <title>Complete sequence of chromosome 1 of Nocardioides sp. JS614.</title>
        <authorList>
            <person name="Copeland A."/>
            <person name="Lucas S."/>
            <person name="Lapidus A."/>
            <person name="Barry K."/>
            <person name="Detter J.C."/>
            <person name="Glavina del Rio T."/>
            <person name="Hammon N."/>
            <person name="Israni S."/>
            <person name="Dalin E."/>
            <person name="Tice H."/>
            <person name="Pitluck S."/>
            <person name="Thompson L.S."/>
            <person name="Brettin T."/>
            <person name="Bruce D."/>
            <person name="Han C."/>
            <person name="Tapia R."/>
            <person name="Schmutz J."/>
            <person name="Larimer F."/>
            <person name="Land M."/>
            <person name="Hauser L."/>
            <person name="Kyrpides N."/>
            <person name="Kim E."/>
            <person name="Mattes T."/>
            <person name="Gossett J."/>
            <person name="Richardson P."/>
        </authorList>
    </citation>
    <scope>NUCLEOTIDE SEQUENCE [LARGE SCALE GENOMIC DNA]</scope>
    <source>
        <strain>ATCC BAA-499 / JS614</strain>
    </source>
</reference>
<feature type="chain" id="PRO_1000006600" description="Cysteine--tRNA ligase">
    <location>
        <begin position="1"/>
        <end position="471"/>
    </location>
</feature>
<feature type="short sequence motif" description="'HIGH' region">
    <location>
        <begin position="31"/>
        <end position="41"/>
    </location>
</feature>
<feature type="short sequence motif" description="'KMSKS' region">
    <location>
        <begin position="271"/>
        <end position="275"/>
    </location>
</feature>
<feature type="binding site" evidence="1">
    <location>
        <position position="29"/>
    </location>
    <ligand>
        <name>Zn(2+)</name>
        <dbReference type="ChEBI" id="CHEBI:29105"/>
    </ligand>
</feature>
<feature type="binding site" evidence="1">
    <location>
        <position position="215"/>
    </location>
    <ligand>
        <name>Zn(2+)</name>
        <dbReference type="ChEBI" id="CHEBI:29105"/>
    </ligand>
</feature>
<feature type="binding site" evidence="1">
    <location>
        <position position="240"/>
    </location>
    <ligand>
        <name>Zn(2+)</name>
        <dbReference type="ChEBI" id="CHEBI:29105"/>
    </ligand>
</feature>
<feature type="binding site" evidence="1">
    <location>
        <position position="244"/>
    </location>
    <ligand>
        <name>Zn(2+)</name>
        <dbReference type="ChEBI" id="CHEBI:29105"/>
    </ligand>
</feature>
<feature type="binding site" evidence="1">
    <location>
        <position position="274"/>
    </location>
    <ligand>
        <name>ATP</name>
        <dbReference type="ChEBI" id="CHEBI:30616"/>
    </ligand>
</feature>
<protein>
    <recommendedName>
        <fullName evidence="1">Cysteine--tRNA ligase</fullName>
        <ecNumber evidence="1">6.1.1.16</ecNumber>
    </recommendedName>
    <alternativeName>
        <fullName evidence="1">Cysteinyl-tRNA synthetase</fullName>
        <shortName evidence="1">CysRS</shortName>
    </alternativeName>
</protein>
<proteinExistence type="inferred from homology"/>
<gene>
    <name evidence="1" type="primary">cysS</name>
    <name type="ordered locus">Noca_4021</name>
</gene>
<keyword id="KW-0030">Aminoacyl-tRNA synthetase</keyword>
<keyword id="KW-0067">ATP-binding</keyword>
<keyword id="KW-0963">Cytoplasm</keyword>
<keyword id="KW-0436">Ligase</keyword>
<keyword id="KW-0479">Metal-binding</keyword>
<keyword id="KW-0547">Nucleotide-binding</keyword>
<keyword id="KW-0648">Protein biosynthesis</keyword>
<keyword id="KW-1185">Reference proteome</keyword>
<keyword id="KW-0862">Zinc</keyword>
<sequence length="471" mass="51887">MTFRLYDTATREVRDFVPLEEGKAGLYVCGLTVQSEPHVGHVRSGVNFDVLQRWLRHLGYDVTFIRNVTDIDDKILVKSAEQGLAWYQLAYRMKRQLDRAYDDLNVAPPTYEPAATGHVPEMIVLIQELIAKGHAYAAEDGSGDVYFDVRSWPQYGELTRQGIDDMEAAEDADPRGKRDPRDFALWKGWKKDSEPETAAWPSPWGPGRPGWHIECSAMAGKYLGPAFDIHGGGVDLRFPHHENEQAQSRAAGRPFATYWMHNAWITTAGEKMSKSLGNSLTIPAVLQKYRGIELRYYLVAAHYRSHVEFSFEALDEAATGFRRIENFLDRAADVLGGIGGGIACADFLNAMNDDLGTPAAVAAIHEVVREGNKLLAAGDSPALRGNAASVVAMLDVLGLDPADPAWSSPGGGRTAERLETVVEGLVSDLLTQREKARADRDFVSADAIRDRLHAVGVQLEDTPDGPKWSLS</sequence>
<organism>
    <name type="scientific">Nocardioides sp. (strain ATCC BAA-499 / JS614)</name>
    <dbReference type="NCBI Taxonomy" id="196162"/>
    <lineage>
        <taxon>Bacteria</taxon>
        <taxon>Bacillati</taxon>
        <taxon>Actinomycetota</taxon>
        <taxon>Actinomycetes</taxon>
        <taxon>Propionibacteriales</taxon>
        <taxon>Nocardioidaceae</taxon>
        <taxon>Nocardioides</taxon>
    </lineage>
</organism>
<name>SYC_NOCSJ</name>
<comment type="catalytic activity">
    <reaction evidence="1">
        <text>tRNA(Cys) + L-cysteine + ATP = L-cysteinyl-tRNA(Cys) + AMP + diphosphate</text>
        <dbReference type="Rhea" id="RHEA:17773"/>
        <dbReference type="Rhea" id="RHEA-COMP:9661"/>
        <dbReference type="Rhea" id="RHEA-COMP:9679"/>
        <dbReference type="ChEBI" id="CHEBI:30616"/>
        <dbReference type="ChEBI" id="CHEBI:33019"/>
        <dbReference type="ChEBI" id="CHEBI:35235"/>
        <dbReference type="ChEBI" id="CHEBI:78442"/>
        <dbReference type="ChEBI" id="CHEBI:78517"/>
        <dbReference type="ChEBI" id="CHEBI:456215"/>
        <dbReference type="EC" id="6.1.1.16"/>
    </reaction>
</comment>
<comment type="cofactor">
    <cofactor evidence="1">
        <name>Zn(2+)</name>
        <dbReference type="ChEBI" id="CHEBI:29105"/>
    </cofactor>
    <text evidence="1">Binds 1 zinc ion per subunit.</text>
</comment>
<comment type="subunit">
    <text evidence="1">Monomer.</text>
</comment>
<comment type="subcellular location">
    <subcellularLocation>
        <location evidence="1">Cytoplasm</location>
    </subcellularLocation>
</comment>
<comment type="similarity">
    <text evidence="1">Belongs to the class-I aminoacyl-tRNA synthetase family.</text>
</comment>
<accession>A1SNY3</accession>
<dbReference type="EC" id="6.1.1.16" evidence="1"/>
<dbReference type="EMBL" id="CP000509">
    <property type="protein sequence ID" value="ABL83518.1"/>
    <property type="molecule type" value="Genomic_DNA"/>
</dbReference>
<dbReference type="RefSeq" id="WP_011757447.1">
    <property type="nucleotide sequence ID" value="NC_008699.1"/>
</dbReference>
<dbReference type="SMR" id="A1SNY3"/>
<dbReference type="STRING" id="196162.Noca_4021"/>
<dbReference type="KEGG" id="nca:Noca_4021"/>
<dbReference type="eggNOG" id="COG0215">
    <property type="taxonomic scope" value="Bacteria"/>
</dbReference>
<dbReference type="HOGENOM" id="CLU_013528_0_1_11"/>
<dbReference type="OrthoDB" id="9815130at2"/>
<dbReference type="Proteomes" id="UP000000640">
    <property type="component" value="Chromosome"/>
</dbReference>
<dbReference type="GO" id="GO:0005829">
    <property type="term" value="C:cytosol"/>
    <property type="evidence" value="ECO:0007669"/>
    <property type="project" value="TreeGrafter"/>
</dbReference>
<dbReference type="GO" id="GO:0005524">
    <property type="term" value="F:ATP binding"/>
    <property type="evidence" value="ECO:0007669"/>
    <property type="project" value="UniProtKB-UniRule"/>
</dbReference>
<dbReference type="GO" id="GO:0004817">
    <property type="term" value="F:cysteine-tRNA ligase activity"/>
    <property type="evidence" value="ECO:0007669"/>
    <property type="project" value="UniProtKB-UniRule"/>
</dbReference>
<dbReference type="GO" id="GO:0008270">
    <property type="term" value="F:zinc ion binding"/>
    <property type="evidence" value="ECO:0007669"/>
    <property type="project" value="UniProtKB-UniRule"/>
</dbReference>
<dbReference type="GO" id="GO:0006423">
    <property type="term" value="P:cysteinyl-tRNA aminoacylation"/>
    <property type="evidence" value="ECO:0007669"/>
    <property type="project" value="UniProtKB-UniRule"/>
</dbReference>
<dbReference type="CDD" id="cd00672">
    <property type="entry name" value="CysRS_core"/>
    <property type="match status" value="1"/>
</dbReference>
<dbReference type="FunFam" id="3.40.50.620:FF:000068">
    <property type="entry name" value="Cysteine--tRNA ligase"/>
    <property type="match status" value="1"/>
</dbReference>
<dbReference type="Gene3D" id="1.20.120.1910">
    <property type="entry name" value="Cysteine-tRNA ligase, C-terminal anti-codon recognition domain"/>
    <property type="match status" value="1"/>
</dbReference>
<dbReference type="Gene3D" id="3.40.50.620">
    <property type="entry name" value="HUPs"/>
    <property type="match status" value="1"/>
</dbReference>
<dbReference type="HAMAP" id="MF_00041">
    <property type="entry name" value="Cys_tRNA_synth"/>
    <property type="match status" value="1"/>
</dbReference>
<dbReference type="InterPro" id="IPR015803">
    <property type="entry name" value="Cys-tRNA-ligase"/>
</dbReference>
<dbReference type="InterPro" id="IPR015273">
    <property type="entry name" value="Cys-tRNA-synt_Ia_DALR"/>
</dbReference>
<dbReference type="InterPro" id="IPR024909">
    <property type="entry name" value="Cys-tRNA/MSH_ligase"/>
</dbReference>
<dbReference type="InterPro" id="IPR056411">
    <property type="entry name" value="CysS_C"/>
</dbReference>
<dbReference type="InterPro" id="IPR014729">
    <property type="entry name" value="Rossmann-like_a/b/a_fold"/>
</dbReference>
<dbReference type="InterPro" id="IPR032678">
    <property type="entry name" value="tRNA-synt_1_cat_dom"/>
</dbReference>
<dbReference type="InterPro" id="IPR009080">
    <property type="entry name" value="tRNAsynth_Ia_anticodon-bd"/>
</dbReference>
<dbReference type="NCBIfam" id="TIGR00435">
    <property type="entry name" value="cysS"/>
    <property type="match status" value="1"/>
</dbReference>
<dbReference type="PANTHER" id="PTHR10890:SF30">
    <property type="entry name" value="CYSTEINE--TRNA LIGASE"/>
    <property type="match status" value="1"/>
</dbReference>
<dbReference type="PANTHER" id="PTHR10890">
    <property type="entry name" value="CYSTEINYL-TRNA SYNTHETASE"/>
    <property type="match status" value="1"/>
</dbReference>
<dbReference type="Pfam" id="PF23493">
    <property type="entry name" value="CysS_C"/>
    <property type="match status" value="1"/>
</dbReference>
<dbReference type="Pfam" id="PF09190">
    <property type="entry name" value="DALR_2"/>
    <property type="match status" value="1"/>
</dbReference>
<dbReference type="Pfam" id="PF01406">
    <property type="entry name" value="tRNA-synt_1e"/>
    <property type="match status" value="1"/>
</dbReference>
<dbReference type="PRINTS" id="PR00983">
    <property type="entry name" value="TRNASYNTHCYS"/>
</dbReference>
<dbReference type="SMART" id="SM00840">
    <property type="entry name" value="DALR_2"/>
    <property type="match status" value="1"/>
</dbReference>
<dbReference type="SUPFAM" id="SSF47323">
    <property type="entry name" value="Anticodon-binding domain of a subclass of class I aminoacyl-tRNA synthetases"/>
    <property type="match status" value="1"/>
</dbReference>
<dbReference type="SUPFAM" id="SSF52374">
    <property type="entry name" value="Nucleotidylyl transferase"/>
    <property type="match status" value="1"/>
</dbReference>
<evidence type="ECO:0000255" key="1">
    <source>
        <dbReference type="HAMAP-Rule" id="MF_00041"/>
    </source>
</evidence>